<keyword id="KW-0067">ATP-binding</keyword>
<keyword id="KW-0237">DNA synthesis</keyword>
<keyword id="KW-0244">Early protein</keyword>
<keyword id="KW-0418">Kinase</keyword>
<keyword id="KW-0547">Nucleotide-binding</keyword>
<keyword id="KW-0808">Transferase</keyword>
<proteinExistence type="inferred from homology"/>
<protein>
    <recommendedName>
        <fullName evidence="1">Thymidine kinase</fullName>
        <ecNumber evidence="1">2.7.1.21</ecNumber>
    </recommendedName>
</protein>
<gene>
    <name evidence="1" type="primary">TK</name>
</gene>
<organismHost>
    <name type="scientific">Gallus gallus</name>
    <name type="common">Chicken</name>
    <dbReference type="NCBI Taxonomy" id="9031"/>
</organismHost>
<organismHost>
    <name type="scientific">Meleagris gallopavo</name>
    <name type="common">Wild turkey</name>
    <dbReference type="NCBI Taxonomy" id="9103"/>
</organismHost>
<comment type="function">
    <text evidence="1">Catalyzes the transfer of the gamma-phospho group of ATP to thymidine to generate dTMP in the salvage pathway of pyrimidine synthesis. The dTMP serves as a substrate for DNA polymerase during viral DNA replication. Allows the virus to be reactivated and to grow in non-proliferative cells lacking a high concentration of phosphorylated nucleic acid precursors.</text>
</comment>
<comment type="catalytic activity">
    <reaction evidence="1">
        <text>thymidine + ATP = dTMP + ADP + H(+)</text>
        <dbReference type="Rhea" id="RHEA:19129"/>
        <dbReference type="ChEBI" id="CHEBI:15378"/>
        <dbReference type="ChEBI" id="CHEBI:17748"/>
        <dbReference type="ChEBI" id="CHEBI:30616"/>
        <dbReference type="ChEBI" id="CHEBI:63528"/>
        <dbReference type="ChEBI" id="CHEBI:456216"/>
        <dbReference type="EC" id="2.7.1.21"/>
    </reaction>
</comment>
<comment type="subunit">
    <text evidence="1">Homodimer.</text>
</comment>
<comment type="similarity">
    <text evidence="1">Belongs to the herpesviridae thymidine kinase family.</text>
</comment>
<organism>
    <name type="scientific">Meleagrid herpesvirus 1 (strain FC126)</name>
    <name type="common">MeHV-1</name>
    <name type="synonym">Turkey herpesvirus</name>
    <dbReference type="NCBI Taxonomy" id="10391"/>
    <lineage>
        <taxon>Viruses</taxon>
        <taxon>Duplodnaviria</taxon>
        <taxon>Heunggongvirae</taxon>
        <taxon>Peploviricota</taxon>
        <taxon>Herviviricetes</taxon>
        <taxon>Herpesvirales</taxon>
        <taxon>Orthoherpesviridae</taxon>
        <taxon>Alphaherpesvirinae</taxon>
        <taxon>Mardivirus</taxon>
        <taxon>Mardivirus gallidalpha2</taxon>
        <taxon>Gallid alphaherpesvirus 2</taxon>
    </lineage>
</organism>
<reference key="1">
    <citation type="journal article" date="1989" name="J. Virol.">
        <title>Genetic and biochemical characterization of the thymidine kinase gene from herpesvirus of turkeys.</title>
        <authorList>
            <person name="Martin S.L."/>
            <person name="Aparisio D.I."/>
            <person name="Bandyopadhyay P.K."/>
        </authorList>
    </citation>
    <scope>NUCLEOTIDE SEQUENCE [GENOMIC DNA]</scope>
</reference>
<feature type="chain" id="PRO_0000175079" description="Thymidine kinase">
    <location>
        <begin position="1"/>
        <end position="310"/>
    </location>
</feature>
<feature type="active site" description="Proton acceptor" evidence="1">
    <location>
        <position position="45"/>
    </location>
</feature>
<feature type="binding site" evidence="1">
    <location>
        <begin position="17"/>
        <end position="24"/>
    </location>
    <ligand>
        <name>ATP</name>
        <dbReference type="ChEBI" id="CHEBI:30616"/>
    </ligand>
</feature>
<feature type="binding site" evidence="1">
    <location>
        <position position="86"/>
    </location>
    <ligand>
        <name>substrate</name>
    </ligand>
</feature>
<feature type="binding site" evidence="1">
    <location>
        <position position="176"/>
    </location>
    <ligand>
        <name>ATP</name>
        <dbReference type="ChEBI" id="CHEBI:30616"/>
    </ligand>
</feature>
<feature type="binding site" evidence="1">
    <location>
        <position position="182"/>
    </location>
    <ligand>
        <name>substrate</name>
    </ligand>
</feature>
<name>KITH_MEHVF</name>
<sequence length="310" mass="35512">MALPRRPPTLTRVYLDGPFGIGKTSILNAMPDHTPDGAPILKVYEPMKYWRCQSTDLVVAANETPERRRGGALSRFQSDMIMASIQARFADPYLLFHERLSSKCRGKIEICDTPAIILMLDRHPVAAILCFPITRYLLGEYSLEMLISSIIRLPLESPGCNLTVTILPDEKEHVNRICSRDRPGETADRNMLRTLNAVYASLVDTVKYANLTCPYEKESWEMEWLGLPWFEESLLEEFISRPRPVICSRTRMPLDRTLLAIFKRKELCSENGELLTQYSWILWGLLTKLHTINVELFDISGMSRRECATL</sequence>
<dbReference type="EC" id="2.7.1.21" evidence="1"/>
<dbReference type="EMBL" id="M26659">
    <property type="protein sequence ID" value="AAA46109.1"/>
    <property type="molecule type" value="Genomic_DNA"/>
</dbReference>
<dbReference type="SMR" id="P13157"/>
<dbReference type="GO" id="GO:0005524">
    <property type="term" value="F:ATP binding"/>
    <property type="evidence" value="ECO:0007669"/>
    <property type="project" value="UniProtKB-KW"/>
</dbReference>
<dbReference type="GO" id="GO:0004797">
    <property type="term" value="F:thymidine kinase activity"/>
    <property type="evidence" value="ECO:0007669"/>
    <property type="project" value="UniProtKB-EC"/>
</dbReference>
<dbReference type="GO" id="GO:0071897">
    <property type="term" value="P:DNA biosynthetic process"/>
    <property type="evidence" value="ECO:0007669"/>
    <property type="project" value="UniProtKB-KW"/>
</dbReference>
<dbReference type="GO" id="GO:0006230">
    <property type="term" value="P:TMP biosynthetic process"/>
    <property type="evidence" value="ECO:0007669"/>
    <property type="project" value="InterPro"/>
</dbReference>
<dbReference type="Gene3D" id="3.40.50.300">
    <property type="entry name" value="P-loop containing nucleotide triphosphate hydrolases"/>
    <property type="match status" value="1"/>
</dbReference>
<dbReference type="HAMAP" id="MF_04029">
    <property type="entry name" value="HSV_KITH"/>
    <property type="match status" value="1"/>
</dbReference>
<dbReference type="InterPro" id="IPR001889">
    <property type="entry name" value="Herpes_TK"/>
</dbReference>
<dbReference type="InterPro" id="IPR027417">
    <property type="entry name" value="P-loop_NTPase"/>
</dbReference>
<dbReference type="Pfam" id="PF00693">
    <property type="entry name" value="Herpes_TK"/>
    <property type="match status" value="1"/>
</dbReference>
<dbReference type="SUPFAM" id="SSF52540">
    <property type="entry name" value="P-loop containing nucleoside triphosphate hydrolases"/>
    <property type="match status" value="1"/>
</dbReference>
<accession>P13157</accession>
<evidence type="ECO:0000255" key="1">
    <source>
        <dbReference type="HAMAP-Rule" id="MF_04029"/>
    </source>
</evidence>